<reference key="1">
    <citation type="journal article" date="2010" name="Environ. Microbiol.">
        <title>The genome of Syntrophomonas wolfei: new insights into syntrophic metabolism and biohydrogen production.</title>
        <authorList>
            <person name="Sieber J.R."/>
            <person name="Sims D.R."/>
            <person name="Han C."/>
            <person name="Kim E."/>
            <person name="Lykidis A."/>
            <person name="Lapidus A.L."/>
            <person name="McDonnald E."/>
            <person name="Rohlin L."/>
            <person name="Culley D.E."/>
            <person name="Gunsalus R."/>
            <person name="McInerney M.J."/>
        </authorList>
    </citation>
    <scope>NUCLEOTIDE SEQUENCE [LARGE SCALE GENOMIC DNA]</scope>
    <source>
        <strain>DSM 2245B / Goettingen</strain>
    </source>
</reference>
<protein>
    <recommendedName>
        <fullName evidence="1">ATP synthase subunit delta</fullName>
    </recommendedName>
    <alternativeName>
        <fullName evidence="1">ATP synthase F(1) sector subunit delta</fullName>
    </alternativeName>
    <alternativeName>
        <fullName evidence="1">F-type ATPase subunit delta</fullName>
        <shortName evidence="1">F-ATPase subunit delta</shortName>
    </alternativeName>
</protein>
<feature type="chain" id="PRO_1000184822" description="ATP synthase subunit delta">
    <location>
        <begin position="1"/>
        <end position="182"/>
    </location>
</feature>
<gene>
    <name evidence="1" type="primary">atpH</name>
    <name type="ordered locus">Swol_2385</name>
</gene>
<organism>
    <name type="scientific">Syntrophomonas wolfei subsp. wolfei (strain DSM 2245B / Goettingen)</name>
    <dbReference type="NCBI Taxonomy" id="335541"/>
    <lineage>
        <taxon>Bacteria</taxon>
        <taxon>Bacillati</taxon>
        <taxon>Bacillota</taxon>
        <taxon>Clostridia</taxon>
        <taxon>Eubacteriales</taxon>
        <taxon>Syntrophomonadaceae</taxon>
        <taxon>Syntrophomonas</taxon>
    </lineage>
</organism>
<proteinExistence type="inferred from homology"/>
<name>ATPD_SYNWW</name>
<keyword id="KW-0066">ATP synthesis</keyword>
<keyword id="KW-1003">Cell membrane</keyword>
<keyword id="KW-0139">CF(1)</keyword>
<keyword id="KW-0375">Hydrogen ion transport</keyword>
<keyword id="KW-0406">Ion transport</keyword>
<keyword id="KW-0472">Membrane</keyword>
<keyword id="KW-1185">Reference proteome</keyword>
<keyword id="KW-0813">Transport</keyword>
<accession>Q0AUD0</accession>
<evidence type="ECO:0000255" key="1">
    <source>
        <dbReference type="HAMAP-Rule" id="MF_01416"/>
    </source>
</evidence>
<dbReference type="EMBL" id="CP000448">
    <property type="protein sequence ID" value="ABI69674.1"/>
    <property type="molecule type" value="Genomic_DNA"/>
</dbReference>
<dbReference type="RefSeq" id="WP_011641758.1">
    <property type="nucleotide sequence ID" value="NC_008346.1"/>
</dbReference>
<dbReference type="SMR" id="Q0AUD0"/>
<dbReference type="STRING" id="335541.Swol_2385"/>
<dbReference type="KEGG" id="swo:Swol_2385"/>
<dbReference type="eggNOG" id="COG0712">
    <property type="taxonomic scope" value="Bacteria"/>
</dbReference>
<dbReference type="HOGENOM" id="CLU_085114_1_1_9"/>
<dbReference type="OrthoDB" id="9802471at2"/>
<dbReference type="Proteomes" id="UP000001968">
    <property type="component" value="Chromosome"/>
</dbReference>
<dbReference type="GO" id="GO:0005886">
    <property type="term" value="C:plasma membrane"/>
    <property type="evidence" value="ECO:0007669"/>
    <property type="project" value="UniProtKB-SubCell"/>
</dbReference>
<dbReference type="GO" id="GO:0045259">
    <property type="term" value="C:proton-transporting ATP synthase complex"/>
    <property type="evidence" value="ECO:0007669"/>
    <property type="project" value="UniProtKB-KW"/>
</dbReference>
<dbReference type="GO" id="GO:0046933">
    <property type="term" value="F:proton-transporting ATP synthase activity, rotational mechanism"/>
    <property type="evidence" value="ECO:0007669"/>
    <property type="project" value="UniProtKB-UniRule"/>
</dbReference>
<dbReference type="Gene3D" id="1.10.520.20">
    <property type="entry name" value="N-terminal domain of the delta subunit of the F1F0-ATP synthase"/>
    <property type="match status" value="1"/>
</dbReference>
<dbReference type="HAMAP" id="MF_01416">
    <property type="entry name" value="ATP_synth_delta_bact"/>
    <property type="match status" value="1"/>
</dbReference>
<dbReference type="InterPro" id="IPR026015">
    <property type="entry name" value="ATP_synth_OSCP/delta_N_sf"/>
</dbReference>
<dbReference type="InterPro" id="IPR000711">
    <property type="entry name" value="ATPase_OSCP/dsu"/>
</dbReference>
<dbReference type="NCBIfam" id="TIGR01145">
    <property type="entry name" value="ATP_synt_delta"/>
    <property type="match status" value="1"/>
</dbReference>
<dbReference type="NCBIfam" id="NF004403">
    <property type="entry name" value="PRK05758.2-4"/>
    <property type="match status" value="1"/>
</dbReference>
<dbReference type="PANTHER" id="PTHR11910">
    <property type="entry name" value="ATP SYNTHASE DELTA CHAIN"/>
    <property type="match status" value="1"/>
</dbReference>
<dbReference type="Pfam" id="PF00213">
    <property type="entry name" value="OSCP"/>
    <property type="match status" value="1"/>
</dbReference>
<dbReference type="PRINTS" id="PR00125">
    <property type="entry name" value="ATPASEDELTA"/>
</dbReference>
<dbReference type="SUPFAM" id="SSF47928">
    <property type="entry name" value="N-terminal domain of the delta subunit of the F1F0-ATP synthase"/>
    <property type="match status" value="1"/>
</dbReference>
<sequence length="182" mass="20350">MLNKSVARRYAEAFFSIARETGKVDELQQELEKLVSIIETTENLPEYFAHLLIPAKAKKEVANKLFGGQVSQLTLNFLNMIIDKRRETYIGLISEEYRDMADELRNITKAELTAAAPVSEADMKNLEQNLSAKTGKTVQLSLKVDPGLIGGLKIRIGDQIVDATVAKKLEMLKEQLKQAKIS</sequence>
<comment type="function">
    <text evidence="1">F(1)F(0) ATP synthase produces ATP from ADP in the presence of a proton or sodium gradient. F-type ATPases consist of two structural domains, F(1) containing the extramembraneous catalytic core and F(0) containing the membrane proton channel, linked together by a central stalk and a peripheral stalk. During catalysis, ATP synthesis in the catalytic domain of F(1) is coupled via a rotary mechanism of the central stalk subunits to proton translocation.</text>
</comment>
<comment type="function">
    <text evidence="1">This protein is part of the stalk that links CF(0) to CF(1). It either transmits conformational changes from CF(0) to CF(1) or is implicated in proton conduction.</text>
</comment>
<comment type="subunit">
    <text evidence="1">F-type ATPases have 2 components, F(1) - the catalytic core - and F(0) - the membrane proton channel. F(1) has five subunits: alpha(3), beta(3), gamma(1), delta(1), epsilon(1). F(0) has three main subunits: a(1), b(2) and c(10-14). The alpha and beta chains form an alternating ring which encloses part of the gamma chain. F(1) is attached to F(0) by a central stalk formed by the gamma and epsilon chains, while a peripheral stalk is formed by the delta and b chains.</text>
</comment>
<comment type="subcellular location">
    <subcellularLocation>
        <location evidence="1">Cell membrane</location>
        <topology evidence="1">Peripheral membrane protein</topology>
    </subcellularLocation>
</comment>
<comment type="similarity">
    <text evidence="1">Belongs to the ATPase delta chain family.</text>
</comment>